<accession>Q8K3R3</accession>
<accession>Q3USN9</accession>
<accession>Q6NZF7</accession>
<accession>Q8CAB1</accession>
<accession>Q9CUC1</accession>
<gene>
    <name evidence="17" type="primary">Plcd4</name>
    <name type="synonym">Plcd</name>
</gene>
<dbReference type="EC" id="3.1.4.11" evidence="2"/>
<dbReference type="EMBL" id="AY033991">
    <property type="protein sequence ID" value="AAK61537.1"/>
    <property type="molecule type" value="mRNA"/>
</dbReference>
<dbReference type="EMBL" id="AK016945">
    <property type="protein sequence ID" value="BAB30513.1"/>
    <property type="molecule type" value="mRNA"/>
</dbReference>
<dbReference type="EMBL" id="AK039149">
    <property type="protein sequence ID" value="BAC30256.1"/>
    <property type="molecule type" value="mRNA"/>
</dbReference>
<dbReference type="EMBL" id="AK140231">
    <property type="protein sequence ID" value="BAE24292.1"/>
    <property type="molecule type" value="mRNA"/>
</dbReference>
<dbReference type="EMBL" id="BC066156">
    <property type="protein sequence ID" value="AAH66156.1"/>
    <property type="molecule type" value="mRNA"/>
</dbReference>
<dbReference type="CCDS" id="CCDS35616.1">
    <molecule id="Q8K3R3-1"/>
</dbReference>
<dbReference type="CCDS" id="CCDS35617.1">
    <molecule id="Q8K3R3-2"/>
</dbReference>
<dbReference type="RefSeq" id="NP_001074925.1">
    <molecule id="Q8K3R3-2"/>
    <property type="nucleotide sequence ID" value="NM_001081456.1"/>
</dbReference>
<dbReference type="RefSeq" id="NP_683739.2">
    <molecule id="Q8K3R3-1"/>
    <property type="nucleotide sequence ID" value="NM_148937.2"/>
</dbReference>
<dbReference type="RefSeq" id="XP_006495851.1">
    <molecule id="Q8K3R3-1"/>
    <property type="nucleotide sequence ID" value="XM_006495788.5"/>
</dbReference>
<dbReference type="SMR" id="Q8K3R3"/>
<dbReference type="FunCoup" id="Q8K3R3">
    <property type="interactions" value="841"/>
</dbReference>
<dbReference type="STRING" id="10090.ENSMUSP00000027362"/>
<dbReference type="iPTMnet" id="Q8K3R3"/>
<dbReference type="PhosphoSitePlus" id="Q8K3R3"/>
<dbReference type="jPOST" id="Q8K3R3"/>
<dbReference type="PaxDb" id="10090-ENSMUSP00000027362"/>
<dbReference type="ProteomicsDB" id="289673">
    <molecule id="Q8K3R3-1"/>
</dbReference>
<dbReference type="ProteomicsDB" id="289674">
    <molecule id="Q8K3R3-2"/>
</dbReference>
<dbReference type="ProteomicsDB" id="289675">
    <molecule id="Q8K3R3-3"/>
</dbReference>
<dbReference type="ProteomicsDB" id="289676">
    <molecule id="Q8K3R3-4"/>
</dbReference>
<dbReference type="Antibodypedia" id="4087">
    <property type="antibodies" value="117 antibodies from 21 providers"/>
</dbReference>
<dbReference type="DNASU" id="18802"/>
<dbReference type="Ensembl" id="ENSMUST00000027362.14">
    <molecule id="Q8K3R3-1"/>
    <property type="protein sequence ID" value="ENSMUSP00000027362.8"/>
    <property type="gene ID" value="ENSMUSG00000026173.17"/>
</dbReference>
<dbReference type="Ensembl" id="ENSMUST00000067916.13">
    <molecule id="Q8K3R3-2"/>
    <property type="protein sequence ID" value="ENSMUSP00000064413.7"/>
    <property type="gene ID" value="ENSMUSG00000026173.17"/>
</dbReference>
<dbReference type="Ensembl" id="ENSMUST00000113747.8">
    <molecule id="Q8K3R3-2"/>
    <property type="protein sequence ID" value="ENSMUSP00000109376.2"/>
    <property type="gene ID" value="ENSMUSG00000026173.17"/>
</dbReference>
<dbReference type="Ensembl" id="ENSMUST00000113750.8">
    <molecule id="Q8K3R3-3"/>
    <property type="protein sequence ID" value="ENSMUSP00000109379.2"/>
    <property type="gene ID" value="ENSMUSG00000026173.17"/>
</dbReference>
<dbReference type="GeneID" id="18802"/>
<dbReference type="KEGG" id="mmu:18802"/>
<dbReference type="UCSC" id="uc007bmg.1">
    <molecule id="Q8K3R3-2"/>
    <property type="organism name" value="mouse"/>
</dbReference>
<dbReference type="UCSC" id="uc007bmh.1">
    <molecule id="Q8K3R3-1"/>
    <property type="organism name" value="mouse"/>
</dbReference>
<dbReference type="UCSC" id="uc007bmi.1">
    <molecule id="Q8K3R3-4"/>
    <property type="organism name" value="mouse"/>
</dbReference>
<dbReference type="UCSC" id="uc011wnb.1">
    <molecule id="Q8K3R3-3"/>
    <property type="organism name" value="mouse"/>
</dbReference>
<dbReference type="AGR" id="MGI:107469"/>
<dbReference type="CTD" id="84812"/>
<dbReference type="MGI" id="MGI:107469">
    <property type="gene designation" value="Plcd4"/>
</dbReference>
<dbReference type="VEuPathDB" id="HostDB:ENSMUSG00000026173"/>
<dbReference type="eggNOG" id="KOG0169">
    <property type="taxonomic scope" value="Eukaryota"/>
</dbReference>
<dbReference type="GeneTree" id="ENSGT00940000156180"/>
<dbReference type="HOGENOM" id="CLU_002738_0_2_1"/>
<dbReference type="InParanoid" id="Q8K3R3"/>
<dbReference type="OMA" id="NCQLHVE"/>
<dbReference type="OrthoDB" id="269822at2759"/>
<dbReference type="PhylomeDB" id="Q8K3R3"/>
<dbReference type="TreeFam" id="TF313216"/>
<dbReference type="Reactome" id="R-MMU-1855204">
    <property type="pathway name" value="Synthesis of IP3 and IP4 in the cytosol"/>
</dbReference>
<dbReference type="BioGRID-ORCS" id="18802">
    <property type="hits" value="2 hits in 79 CRISPR screens"/>
</dbReference>
<dbReference type="ChiTaRS" id="Plcd4">
    <property type="organism name" value="mouse"/>
</dbReference>
<dbReference type="PRO" id="PR:Q8K3R3"/>
<dbReference type="Proteomes" id="UP000000589">
    <property type="component" value="Chromosome 1"/>
</dbReference>
<dbReference type="RNAct" id="Q8K3R3">
    <property type="molecule type" value="protein"/>
</dbReference>
<dbReference type="Bgee" id="ENSMUSG00000026173">
    <property type="expression patterns" value="Expressed in gastrocnemius medialis and 121 other cell types or tissues"/>
</dbReference>
<dbReference type="ExpressionAtlas" id="Q8K3R3">
    <property type="expression patterns" value="baseline and differential"/>
</dbReference>
<dbReference type="GO" id="GO:0005829">
    <property type="term" value="C:cytosol"/>
    <property type="evidence" value="ECO:0007669"/>
    <property type="project" value="Ensembl"/>
</dbReference>
<dbReference type="GO" id="GO:0005783">
    <property type="term" value="C:endoplasmic reticulum"/>
    <property type="evidence" value="ECO:0007669"/>
    <property type="project" value="UniProtKB-SubCell"/>
</dbReference>
<dbReference type="GO" id="GO:0005634">
    <property type="term" value="C:nucleus"/>
    <property type="evidence" value="ECO:0007669"/>
    <property type="project" value="UniProtKB-SubCell"/>
</dbReference>
<dbReference type="GO" id="GO:0005886">
    <property type="term" value="C:plasma membrane"/>
    <property type="evidence" value="ECO:0007669"/>
    <property type="project" value="Ensembl"/>
</dbReference>
<dbReference type="GO" id="GO:0005509">
    <property type="term" value="F:calcium ion binding"/>
    <property type="evidence" value="ECO:0007669"/>
    <property type="project" value="InterPro"/>
</dbReference>
<dbReference type="GO" id="GO:0001965">
    <property type="term" value="F:G-protein alpha-subunit binding"/>
    <property type="evidence" value="ECO:0000250"/>
    <property type="project" value="UniProtKB"/>
</dbReference>
<dbReference type="GO" id="GO:0004435">
    <property type="term" value="F:phosphatidylinositol-4,5-bisphosphate phospholipase C activity"/>
    <property type="evidence" value="ECO:0007669"/>
    <property type="project" value="UniProtKB-EC"/>
</dbReference>
<dbReference type="GO" id="GO:0004629">
    <property type="term" value="F:phospholipase C activity"/>
    <property type="evidence" value="ECO:0000304"/>
    <property type="project" value="MGI"/>
</dbReference>
<dbReference type="GO" id="GO:0007340">
    <property type="term" value="P:acrosome reaction"/>
    <property type="evidence" value="ECO:0000315"/>
    <property type="project" value="MGI"/>
</dbReference>
<dbReference type="GO" id="GO:0035556">
    <property type="term" value="P:intracellular signal transduction"/>
    <property type="evidence" value="ECO:0007669"/>
    <property type="project" value="InterPro"/>
</dbReference>
<dbReference type="GO" id="GO:0016042">
    <property type="term" value="P:lipid catabolic process"/>
    <property type="evidence" value="ECO:0007669"/>
    <property type="project" value="UniProtKB-KW"/>
</dbReference>
<dbReference type="GO" id="GO:0046488">
    <property type="term" value="P:phosphatidylinositol metabolic process"/>
    <property type="evidence" value="ECO:0000304"/>
    <property type="project" value="MGI"/>
</dbReference>
<dbReference type="GO" id="GO:0007165">
    <property type="term" value="P:signal transduction"/>
    <property type="evidence" value="ECO:0000304"/>
    <property type="project" value="MGI"/>
</dbReference>
<dbReference type="CDD" id="cd00275">
    <property type="entry name" value="C2_PLC_like"/>
    <property type="match status" value="1"/>
</dbReference>
<dbReference type="FunFam" id="1.10.238.10:FF:000005">
    <property type="entry name" value="Phosphoinositide phospholipase C"/>
    <property type="match status" value="1"/>
</dbReference>
<dbReference type="FunFam" id="2.30.29.30:FF:000088">
    <property type="entry name" value="Phosphoinositide phospholipase C"/>
    <property type="match status" value="1"/>
</dbReference>
<dbReference type="FunFam" id="2.60.40.150:FF:000058">
    <property type="entry name" value="Phosphoinositide phospholipase C"/>
    <property type="match status" value="1"/>
</dbReference>
<dbReference type="Gene3D" id="2.60.40.150">
    <property type="entry name" value="C2 domain"/>
    <property type="match status" value="1"/>
</dbReference>
<dbReference type="Gene3D" id="1.10.238.10">
    <property type="entry name" value="EF-hand"/>
    <property type="match status" value="2"/>
</dbReference>
<dbReference type="Gene3D" id="3.20.20.190">
    <property type="entry name" value="Phosphatidylinositol (PI) phosphodiesterase"/>
    <property type="match status" value="1"/>
</dbReference>
<dbReference type="Gene3D" id="2.30.29.30">
    <property type="entry name" value="Pleckstrin-homology domain (PH domain)/Phosphotyrosine-binding domain (PTB)"/>
    <property type="match status" value="1"/>
</dbReference>
<dbReference type="InterPro" id="IPR000008">
    <property type="entry name" value="C2_dom"/>
</dbReference>
<dbReference type="InterPro" id="IPR035892">
    <property type="entry name" value="C2_domain_sf"/>
</dbReference>
<dbReference type="InterPro" id="IPR011992">
    <property type="entry name" value="EF-hand-dom_pair"/>
</dbReference>
<dbReference type="InterPro" id="IPR002048">
    <property type="entry name" value="EF_hand_dom"/>
</dbReference>
<dbReference type="InterPro" id="IPR011993">
    <property type="entry name" value="PH-like_dom_sf"/>
</dbReference>
<dbReference type="InterPro" id="IPR001849">
    <property type="entry name" value="PH_domain"/>
</dbReference>
<dbReference type="InterPro" id="IPR001192">
    <property type="entry name" value="PI-PLC_fam"/>
</dbReference>
<dbReference type="InterPro" id="IPR017946">
    <property type="entry name" value="PLC-like_Pdiesterase_TIM-brl"/>
</dbReference>
<dbReference type="InterPro" id="IPR015359">
    <property type="entry name" value="PLC_EF-hand-like"/>
</dbReference>
<dbReference type="InterPro" id="IPR000909">
    <property type="entry name" value="PLipase_C_PInositol-sp_X_dom"/>
</dbReference>
<dbReference type="InterPro" id="IPR001711">
    <property type="entry name" value="PLipase_C_Pinositol-sp_Y"/>
</dbReference>
<dbReference type="PANTHER" id="PTHR10336:SF31">
    <property type="entry name" value="1-PHOSPHATIDYLINOSITOL 4,5-BISPHOSPHATE PHOSPHODIESTERASE DELTA-4"/>
    <property type="match status" value="1"/>
</dbReference>
<dbReference type="PANTHER" id="PTHR10336">
    <property type="entry name" value="PHOSPHOINOSITIDE-SPECIFIC PHOSPHOLIPASE C FAMILY PROTEIN"/>
    <property type="match status" value="1"/>
</dbReference>
<dbReference type="Pfam" id="PF00168">
    <property type="entry name" value="C2"/>
    <property type="match status" value="1"/>
</dbReference>
<dbReference type="Pfam" id="PF09279">
    <property type="entry name" value="EF-hand_like"/>
    <property type="match status" value="1"/>
</dbReference>
<dbReference type="Pfam" id="PF00169">
    <property type="entry name" value="PH"/>
    <property type="match status" value="1"/>
</dbReference>
<dbReference type="Pfam" id="PF00388">
    <property type="entry name" value="PI-PLC-X"/>
    <property type="match status" value="1"/>
</dbReference>
<dbReference type="Pfam" id="PF00387">
    <property type="entry name" value="PI-PLC-Y"/>
    <property type="match status" value="1"/>
</dbReference>
<dbReference type="PRINTS" id="PR00390">
    <property type="entry name" value="PHPHLIPASEC"/>
</dbReference>
<dbReference type="SMART" id="SM00239">
    <property type="entry name" value="C2"/>
    <property type="match status" value="1"/>
</dbReference>
<dbReference type="SMART" id="SM00054">
    <property type="entry name" value="EFh"/>
    <property type="match status" value="3"/>
</dbReference>
<dbReference type="SMART" id="SM00233">
    <property type="entry name" value="PH"/>
    <property type="match status" value="1"/>
</dbReference>
<dbReference type="SMART" id="SM00148">
    <property type="entry name" value="PLCXc"/>
    <property type="match status" value="1"/>
</dbReference>
<dbReference type="SMART" id="SM00149">
    <property type="entry name" value="PLCYc"/>
    <property type="match status" value="1"/>
</dbReference>
<dbReference type="SUPFAM" id="SSF49562">
    <property type="entry name" value="C2 domain (Calcium/lipid-binding domain, CaLB)"/>
    <property type="match status" value="1"/>
</dbReference>
<dbReference type="SUPFAM" id="SSF47473">
    <property type="entry name" value="EF-hand"/>
    <property type="match status" value="1"/>
</dbReference>
<dbReference type="SUPFAM" id="SSF50729">
    <property type="entry name" value="PH domain-like"/>
    <property type="match status" value="1"/>
</dbReference>
<dbReference type="SUPFAM" id="SSF51695">
    <property type="entry name" value="PLC-like phosphodiesterases"/>
    <property type="match status" value="1"/>
</dbReference>
<dbReference type="PROSITE" id="PS50004">
    <property type="entry name" value="C2"/>
    <property type="match status" value="1"/>
</dbReference>
<dbReference type="PROSITE" id="PS50222">
    <property type="entry name" value="EF_HAND_2"/>
    <property type="match status" value="3"/>
</dbReference>
<dbReference type="PROSITE" id="PS50003">
    <property type="entry name" value="PH_DOMAIN"/>
    <property type="match status" value="1"/>
</dbReference>
<dbReference type="PROSITE" id="PS50007">
    <property type="entry name" value="PIPLC_X_DOMAIN"/>
    <property type="match status" value="1"/>
</dbReference>
<dbReference type="PROSITE" id="PS50008">
    <property type="entry name" value="PIPLC_Y_DOMAIN"/>
    <property type="match status" value="1"/>
</dbReference>
<proteinExistence type="evidence at protein level"/>
<feature type="chain" id="PRO_0000306826" description="1-phosphatidylinositol 4,5-bisphosphate phosphodiesterase delta-4">
    <location>
        <begin position="1"/>
        <end position="807"/>
    </location>
</feature>
<feature type="domain" description="PH" evidence="4">
    <location>
        <begin position="16"/>
        <end position="124"/>
    </location>
</feature>
<feature type="domain" description="EF-hand 1" evidence="7">
    <location>
        <begin position="134"/>
        <end position="169"/>
    </location>
</feature>
<feature type="domain" description="EF-hand 2" evidence="7">
    <location>
        <begin position="170"/>
        <end position="205"/>
    </location>
</feature>
<feature type="domain" description="EF-hand 3" evidence="7">
    <location>
        <begin position="203"/>
        <end position="237"/>
    </location>
</feature>
<feature type="domain" description="PI-PLC X-box" evidence="5">
    <location>
        <begin position="290"/>
        <end position="435"/>
    </location>
</feature>
<feature type="domain" description="PI-PLC Y-box" evidence="6">
    <location>
        <begin position="538"/>
        <end position="654"/>
    </location>
</feature>
<feature type="domain" description="C2" evidence="3">
    <location>
        <begin position="654"/>
        <end position="781"/>
    </location>
</feature>
<feature type="region of interest" description="Substrate binding" evidence="1">
    <location>
        <begin position="26"/>
        <end position="53"/>
    </location>
</feature>
<feature type="region of interest" description="Disordered" evidence="8">
    <location>
        <begin position="442"/>
        <end position="490"/>
    </location>
</feature>
<feature type="short sequence motif" description="GBA" evidence="2">
    <location>
        <begin position="213"/>
        <end position="243"/>
    </location>
</feature>
<feature type="short sequence motif" description="PDZ-binding">
    <location>
        <begin position="776"/>
        <end position="779"/>
    </location>
</feature>
<feature type="compositionally biased region" description="Acidic residues" evidence="8">
    <location>
        <begin position="443"/>
        <end position="462"/>
    </location>
</feature>
<feature type="compositionally biased region" description="Polar residues" evidence="8">
    <location>
        <begin position="470"/>
        <end position="482"/>
    </location>
</feature>
<feature type="active site" evidence="5">
    <location>
        <position position="305"/>
    </location>
</feature>
<feature type="active site" evidence="5">
    <location>
        <position position="350"/>
    </location>
</feature>
<feature type="binding site" evidence="16">
    <location>
        <position position="147"/>
    </location>
    <ligand>
        <name>Ca(2+)</name>
        <dbReference type="ChEBI" id="CHEBI:29108"/>
        <label>1</label>
    </ligand>
</feature>
<feature type="binding site" evidence="16">
    <location>
        <position position="149"/>
    </location>
    <ligand>
        <name>Ca(2+)</name>
        <dbReference type="ChEBI" id="CHEBI:29108"/>
        <label>1</label>
    </ligand>
</feature>
<feature type="binding site" evidence="16">
    <location>
        <position position="151"/>
    </location>
    <ligand>
        <name>Ca(2+)</name>
        <dbReference type="ChEBI" id="CHEBI:29108"/>
        <label>1</label>
    </ligand>
</feature>
<feature type="binding site" evidence="16">
    <location>
        <position position="153"/>
    </location>
    <ligand>
        <name>Ca(2+)</name>
        <dbReference type="ChEBI" id="CHEBI:29108"/>
        <label>1</label>
    </ligand>
</feature>
<feature type="binding site" evidence="16">
    <location>
        <position position="158"/>
    </location>
    <ligand>
        <name>Ca(2+)</name>
        <dbReference type="ChEBI" id="CHEBI:29108"/>
        <label>1</label>
    </ligand>
</feature>
<feature type="binding site" evidence="16">
    <location>
        <position position="183"/>
    </location>
    <ligand>
        <name>Ca(2+)</name>
        <dbReference type="ChEBI" id="CHEBI:29108"/>
        <label>2</label>
    </ligand>
</feature>
<feature type="binding site" evidence="16">
    <location>
        <position position="187"/>
    </location>
    <ligand>
        <name>Ca(2+)</name>
        <dbReference type="ChEBI" id="CHEBI:29108"/>
        <label>2</label>
    </ligand>
</feature>
<feature type="binding site" evidence="16">
    <location>
        <position position="189"/>
    </location>
    <ligand>
        <name>Ca(2+)</name>
        <dbReference type="ChEBI" id="CHEBI:29108"/>
        <label>2</label>
    </ligand>
</feature>
<feature type="binding site" evidence="16">
    <location>
        <position position="194"/>
    </location>
    <ligand>
        <name>Ca(2+)</name>
        <dbReference type="ChEBI" id="CHEBI:29108"/>
        <label>2</label>
    </ligand>
</feature>
<feature type="binding site" evidence="1">
    <location>
        <position position="306"/>
    </location>
    <ligand>
        <name>Ca(2+)</name>
        <dbReference type="ChEBI" id="CHEBI:29108"/>
        <label>3</label>
        <note>catalytic</note>
    </ligand>
</feature>
<feature type="binding site" evidence="1">
    <location>
        <position position="335"/>
    </location>
    <ligand>
        <name>Ca(2+)</name>
        <dbReference type="ChEBI" id="CHEBI:29108"/>
        <label>3</label>
        <note>catalytic</note>
    </ligand>
</feature>
<feature type="binding site" evidence="1">
    <location>
        <position position="337"/>
    </location>
    <ligand>
        <name>Ca(2+)</name>
        <dbReference type="ChEBI" id="CHEBI:29108"/>
        <label>3</label>
        <note>catalytic</note>
    </ligand>
</feature>
<feature type="binding site" evidence="1">
    <location>
        <position position="384"/>
    </location>
    <ligand>
        <name>Ca(2+)</name>
        <dbReference type="ChEBI" id="CHEBI:29108"/>
        <label>3</label>
        <note>catalytic</note>
    </ligand>
</feature>
<feature type="binding site" evidence="1">
    <location>
        <position position="433"/>
    </location>
    <ligand>
        <name>substrate</name>
    </ligand>
</feature>
<feature type="binding site" evidence="1">
    <location>
        <position position="435"/>
    </location>
    <ligand>
        <name>substrate</name>
    </ligand>
</feature>
<feature type="binding site" evidence="1">
    <location>
        <position position="567"/>
    </location>
    <ligand>
        <name>substrate</name>
    </ligand>
</feature>
<feature type="binding site" evidence="1">
    <location>
        <position position="594"/>
    </location>
    <ligand>
        <name>substrate</name>
    </ligand>
</feature>
<feature type="binding site" evidence="1">
    <location>
        <position position="697"/>
    </location>
    <ligand>
        <name>Ca(2+)</name>
        <dbReference type="ChEBI" id="CHEBI:29108"/>
        <label>4</label>
    </ligand>
</feature>
<feature type="binding site" evidence="1">
    <location>
        <position position="721"/>
    </location>
    <ligand>
        <name>Ca(2+)</name>
        <dbReference type="ChEBI" id="CHEBI:29108"/>
        <label>4</label>
    </ligand>
</feature>
<feature type="binding site" evidence="1">
    <location>
        <position position="750"/>
    </location>
    <ligand>
        <name>Ca(2+)</name>
        <dbReference type="ChEBI" id="CHEBI:29108"/>
        <label>5</label>
    </ligand>
</feature>
<feature type="binding site" evidence="1">
    <location>
        <position position="751"/>
    </location>
    <ligand>
        <name>Ca(2+)</name>
        <dbReference type="ChEBI" id="CHEBI:29108"/>
        <label>5</label>
    </ligand>
</feature>
<feature type="splice variant" id="VSP_028503" description="In isoform 2 and isoform 3." evidence="14 15">
    <location>
        <begin position="493"/>
        <end position="524"/>
    </location>
</feature>
<feature type="splice variant" id="VSP_028504" description="In isoform 4." evidence="15">
    <original>MKC</original>
    <variation>SQD</variation>
    <location>
        <begin position="494"/>
        <end position="496"/>
    </location>
</feature>
<feature type="splice variant" id="VSP_028505" description="In isoform 4." evidence="15">
    <location>
        <begin position="497"/>
        <end position="807"/>
    </location>
</feature>
<feature type="splice variant" id="VSP_028506" description="In isoform 3." evidence="15">
    <original>GYRHVSLLSRDGTSLNPASIFVYTCMQEDLDMDEP</original>
    <variation>EMALASIQLPSLYTPACRKTWIWMSPEKHREGLEEQSTDAQSFPTYNFLKIQSQPKDQ</variation>
    <location>
        <begin position="773"/>
        <end position="807"/>
    </location>
</feature>
<feature type="sequence conflict" description="In Ref. 2; BAE24292." evidence="16" ref="2">
    <original>Q</original>
    <variation>R</variation>
    <location>
        <position position="180"/>
    </location>
</feature>
<feature type="sequence conflict" description="In Ref. 3; AAH66156." evidence="16" ref="3">
    <original>V</original>
    <variation>A</variation>
    <location>
        <position position="310"/>
    </location>
</feature>
<feature type="sequence conflict" description="In Ref. 3; AAH66156." evidence="16" ref="3">
    <original>F</original>
    <variation>L</variation>
    <location>
        <position position="372"/>
    </location>
</feature>
<feature type="sequence conflict" description="In Ref. 2; BAE24292." evidence="16" ref="2">
    <location>
        <position position="445"/>
    </location>
</feature>
<feature type="sequence conflict" description="In Ref. 1; AAK61537." evidence="16" ref="1">
    <original>L</original>
    <variation>F</variation>
    <location>
        <position position="470"/>
    </location>
</feature>
<feature type="sequence conflict" description="In Ref. 3; AAH66156." evidence="16" ref="3">
    <original>R</original>
    <variation>C</variation>
    <location>
        <position position="594"/>
    </location>
</feature>
<feature type="sequence conflict" description="In Ref. 1; AAK61537." evidence="16" ref="1">
    <original>L</original>
    <variation>V</variation>
    <location>
        <position position="653"/>
    </location>
</feature>
<evidence type="ECO:0000250" key="1"/>
<evidence type="ECO:0000250" key="2">
    <source>
        <dbReference type="UniProtKB" id="Q9BRC7"/>
    </source>
</evidence>
<evidence type="ECO:0000255" key="3">
    <source>
        <dbReference type="PROSITE-ProRule" id="PRU00041"/>
    </source>
</evidence>
<evidence type="ECO:0000255" key="4">
    <source>
        <dbReference type="PROSITE-ProRule" id="PRU00145"/>
    </source>
</evidence>
<evidence type="ECO:0000255" key="5">
    <source>
        <dbReference type="PROSITE-ProRule" id="PRU00270"/>
    </source>
</evidence>
<evidence type="ECO:0000255" key="6">
    <source>
        <dbReference type="PROSITE-ProRule" id="PRU00271"/>
    </source>
</evidence>
<evidence type="ECO:0000255" key="7">
    <source>
        <dbReference type="PROSITE-ProRule" id="PRU00448"/>
    </source>
</evidence>
<evidence type="ECO:0000256" key="8">
    <source>
        <dbReference type="SAM" id="MobiDB-lite"/>
    </source>
</evidence>
<evidence type="ECO:0000269" key="9">
    <source>
    </source>
</evidence>
<evidence type="ECO:0000269" key="10">
    <source>
    </source>
</evidence>
<evidence type="ECO:0000269" key="11">
    <source>
    </source>
</evidence>
<evidence type="ECO:0000269" key="12">
    <source>
    </source>
</evidence>
<evidence type="ECO:0000269" key="13">
    <source>
    </source>
</evidence>
<evidence type="ECO:0000303" key="14">
    <source>
    </source>
</evidence>
<evidence type="ECO:0000303" key="15">
    <source>
    </source>
</evidence>
<evidence type="ECO:0000305" key="16"/>
<evidence type="ECO:0000312" key="17">
    <source>
        <dbReference type="MGI" id="MGI:107469"/>
    </source>
</evidence>
<keyword id="KW-0025">Alternative splicing</keyword>
<keyword id="KW-0106">Calcium</keyword>
<keyword id="KW-0963">Cytoplasm</keyword>
<keyword id="KW-0256">Endoplasmic reticulum</keyword>
<keyword id="KW-0378">Hydrolase</keyword>
<keyword id="KW-0442">Lipid degradation</keyword>
<keyword id="KW-0443">Lipid metabolism</keyword>
<keyword id="KW-0472">Membrane</keyword>
<keyword id="KW-0479">Metal-binding</keyword>
<keyword id="KW-0539">Nucleus</keyword>
<keyword id="KW-1185">Reference proteome</keyword>
<keyword id="KW-0677">Repeat</keyword>
<keyword id="KW-0807">Transducer</keyword>
<name>PLCD4_MOUSE</name>
<comment type="function">
    <text evidence="10 11 13">Hydrolyzes the phosphatidylinositol 4,5-bisphosphate (PIP2) to generate 2 second messenger molecules diacylglycerol (DAG) and inositol 1,4,5-trisphosphate (IP3). DAG mediates the activation of protein kinase C (PKC), while IP3 releases Ca(2+) from intracellular stores. Required for acrosome reaction in sperm during fertilization, probably by acting as an important enzyme for intracellular Ca(2+) mobilization in the zona pellucida-induced acrosome reaction. May play a role in cell growth. Modulates the liver regeneration in cooperation with nuclear PKC. Overexpression up-regulates the Erk signaling pathway and proliferation.</text>
</comment>
<comment type="catalytic activity">
    <reaction evidence="2">
        <text>a 1,2-diacyl-sn-glycero-3-phospho-(1D-myo-inositol-4,5-bisphosphate) + H2O = 1D-myo-inositol 1,4,5-trisphosphate + a 1,2-diacyl-sn-glycerol + H(+)</text>
        <dbReference type="Rhea" id="RHEA:33179"/>
        <dbReference type="ChEBI" id="CHEBI:15377"/>
        <dbReference type="ChEBI" id="CHEBI:15378"/>
        <dbReference type="ChEBI" id="CHEBI:17815"/>
        <dbReference type="ChEBI" id="CHEBI:58456"/>
        <dbReference type="ChEBI" id="CHEBI:203600"/>
        <dbReference type="EC" id="3.1.4.11"/>
    </reaction>
    <physiologicalReaction direction="left-to-right" evidence="2">
        <dbReference type="Rhea" id="RHEA:33180"/>
    </physiologicalReaction>
</comment>
<comment type="catalytic activity">
    <reaction evidence="2">
        <text>a 1,2-diacyl-sn-glycero-3-phospho-(1D-myo-inositol) + H2O = 1D-myo-inositol 1-phosphate + a 1,2-diacyl-sn-glycerol + H(+)</text>
        <dbReference type="Rhea" id="RHEA:43484"/>
        <dbReference type="ChEBI" id="CHEBI:15377"/>
        <dbReference type="ChEBI" id="CHEBI:15378"/>
        <dbReference type="ChEBI" id="CHEBI:17815"/>
        <dbReference type="ChEBI" id="CHEBI:57880"/>
        <dbReference type="ChEBI" id="CHEBI:58433"/>
    </reaction>
    <physiologicalReaction direction="left-to-right" evidence="2">
        <dbReference type="Rhea" id="RHEA:43485"/>
    </physiologicalReaction>
</comment>
<comment type="cofactor">
    <cofactor evidence="1">
        <name>Ca(2+)</name>
        <dbReference type="ChEBI" id="CHEBI:29108"/>
    </cofactor>
    <text evidence="1">Binds 5 Ca(2+) ions per subunit. Two of the Ca(2+) ions are bound to the C2 domain.</text>
</comment>
<comment type="subunit">
    <text evidence="2 12">Interacts with GRIP1 (PubMed:16272139). Interacts (via GBA motif) with guanine nucleotide-binding protein G(i) alpha subunit GNAI3 (inactive GDP-bound form)l low-affinity interaction (By similarity).</text>
</comment>
<comment type="subcellular location">
    <subcellularLocation>
        <location evidence="1">Membrane</location>
        <topology evidence="1">Peripheral membrane protein</topology>
    </subcellularLocation>
    <subcellularLocation>
        <location evidence="1">Nucleus</location>
    </subcellularLocation>
    <subcellularLocation>
        <location evidence="1">Cytoplasm</location>
    </subcellularLocation>
    <subcellularLocation>
        <location evidence="1">Endoplasmic reticulum</location>
    </subcellularLocation>
    <text evidence="1">Localizes primarily to intracellular membranes mostly to the endoplasmic reticulum.</text>
</comment>
<comment type="alternative products">
    <event type="alternative splicing"/>
    <isoform>
        <id>Q8K3R3-1</id>
        <name>1</name>
        <sequence type="displayed"/>
    </isoform>
    <isoform>
        <id>Q8K3R3-2</id>
        <name>2</name>
        <sequence type="described" ref="VSP_028503"/>
    </isoform>
    <isoform>
        <id>Q8K3R3-3</id>
        <name>3</name>
        <sequence type="described" ref="VSP_028503 VSP_028506"/>
    </isoform>
    <isoform>
        <id>Q8K3R3-4</id>
        <name>4</name>
        <sequence type="described" ref="VSP_028504 VSP_028505"/>
    </isoform>
</comment>
<comment type="induction">
    <text evidence="9">By treatment with growth factors such as bradykinin, lysophosphatidic acid, and Ca(2+) ionophore in addition to serum.</text>
</comment>
<comment type="domain">
    <text>The PDZ-binding motif mediates the interaction with GRIP1.</text>
</comment>
<comment type="domain">
    <text evidence="1">The C2 domain mediates pre-localization to the membrane prior to Ca(2+) import and non-selective Ca(2+)-mediated targeting to various cellular membranes.</text>
</comment>
<comment type="domain">
    <text evidence="1">The PH domain is not a critical determinant of the membrane localization.</text>
</comment>
<comment type="domain">
    <text evidence="2">The GBA (G-alpha binding and activating) motif mediates binding to the alpha subunits of guanine nucleotide-binding proteins (G proteins).</text>
</comment>
<comment type="disruption phenotype">
    <text evidence="10">Mice are either sterile or produce few small litters. In these mice, fewer eggs become activated and the Ca(2+) transients associated with fertilization are absent or delayed. Sperm are unable to initiate the acrosome reaction.</text>
</comment>
<sequence length="807" mass="92694">MTSQIQDLLATDQDLLLMQEGTMMRKVRTKSWKKLRYFRLQNDGMTVWHGSQPESMPKPTFSISDVERIRKGQDSELLRYLVEEFPLEQGFTVVFHGRRPNLDLVANSVEEAQIWMRGLQLLVDLVASMDHQEQMDQMLNEWFQQADRNQDGRMSFREAQRLLLLMNVEMDEEYAFSLFQEADVTQSDDLGSEEFVQFYKALTKRTEIEEIFEDFSSDKQKLTLLEFVDFLRKEQKEKDHAPDLALELIDRYEPSENGRLLHVLSKDGFLKYLCSKDGNIFNSDCLPIYQDMTQPLSHYYINSSHNTYLVGDQLCGQSSVEGYIRALKRGCRCVEVDTWDGPDGEPVVYHGHTLTSRILFKDVLATLAQYAFQSSDYPLILSLENHCTWEQQRTMAHHLTEILGEQLLRNTLEGLLVDSMPSPEQLRGKILVKGKKLRTIEVDKEEEEEEEEEELEKDEGPDLDPASPELDTQPQPETQGQAAGNKKERKKKVMKCPMSCLLICGHVMAQAPSSIPESILLSKQFLLLSSTTIMCPDLSALVVYLRTVPFCSFTHSKENYHIYDISSFSESKAKNLIKEAGNEFVQHNARQLCRVYPSGLRTDSSNFNPQEHWNVGCQMVAMNMQTAGSAMDICDGLFRQNGGSGYVLKPEFLRDTQSSFNPERPISLYKAQILVVQVISGQQLPKVDKTKETTVVDPLVKVELYGVPEDTKEQETSHVENNGINPYWGETFYFRLQVPELAMLRFVVKDYSRKSRNNFIGQYTLPWTCMKQGYRHVSLLSRDGTSLNPASIFVYTCMQEDLDMDEP</sequence>
<protein>
    <recommendedName>
        <fullName evidence="16">1-phosphatidylinositol 4,5-bisphosphate phosphodiesterase delta-4</fullName>
        <ecNumber evidence="2">3.1.4.11</ecNumber>
    </recommendedName>
    <alternativeName>
        <fullName>Phosphoinositide phospholipase C-delta-4</fullName>
    </alternativeName>
    <alternativeName>
        <fullName>Phospholipase C-delta-4</fullName>
        <shortName>PLC-delta-4</shortName>
    </alternativeName>
</protein>
<reference key="1">
    <citation type="submission" date="2001-05" db="EMBL/GenBank/DDBJ databases">
        <title>Molecular cloning of PLC delta4.</title>
        <authorList>
            <person name="Kim J."/>
            <person name="Kim H."/>
            <person name="Lee K.-H."/>
        </authorList>
    </citation>
    <scope>NUCLEOTIDE SEQUENCE [MRNA] (ISOFORM 1)</scope>
    <source>
        <tissue>Testis</tissue>
    </source>
</reference>
<reference key="2">
    <citation type="journal article" date="2005" name="Science">
        <title>The transcriptional landscape of the mammalian genome.</title>
        <authorList>
            <person name="Carninci P."/>
            <person name="Kasukawa T."/>
            <person name="Katayama S."/>
            <person name="Gough J."/>
            <person name="Frith M.C."/>
            <person name="Maeda N."/>
            <person name="Oyama R."/>
            <person name="Ravasi T."/>
            <person name="Lenhard B."/>
            <person name="Wells C."/>
            <person name="Kodzius R."/>
            <person name="Shimokawa K."/>
            <person name="Bajic V.B."/>
            <person name="Brenner S.E."/>
            <person name="Batalov S."/>
            <person name="Forrest A.R."/>
            <person name="Zavolan M."/>
            <person name="Davis M.J."/>
            <person name="Wilming L.G."/>
            <person name="Aidinis V."/>
            <person name="Allen J.E."/>
            <person name="Ambesi-Impiombato A."/>
            <person name="Apweiler R."/>
            <person name="Aturaliya R.N."/>
            <person name="Bailey T.L."/>
            <person name="Bansal M."/>
            <person name="Baxter L."/>
            <person name="Beisel K.W."/>
            <person name="Bersano T."/>
            <person name="Bono H."/>
            <person name="Chalk A.M."/>
            <person name="Chiu K.P."/>
            <person name="Choudhary V."/>
            <person name="Christoffels A."/>
            <person name="Clutterbuck D.R."/>
            <person name="Crowe M.L."/>
            <person name="Dalla E."/>
            <person name="Dalrymple B.P."/>
            <person name="de Bono B."/>
            <person name="Della Gatta G."/>
            <person name="di Bernardo D."/>
            <person name="Down T."/>
            <person name="Engstrom P."/>
            <person name="Fagiolini M."/>
            <person name="Faulkner G."/>
            <person name="Fletcher C.F."/>
            <person name="Fukushima T."/>
            <person name="Furuno M."/>
            <person name="Futaki S."/>
            <person name="Gariboldi M."/>
            <person name="Georgii-Hemming P."/>
            <person name="Gingeras T.R."/>
            <person name="Gojobori T."/>
            <person name="Green R.E."/>
            <person name="Gustincich S."/>
            <person name="Harbers M."/>
            <person name="Hayashi Y."/>
            <person name="Hensch T.K."/>
            <person name="Hirokawa N."/>
            <person name="Hill D."/>
            <person name="Huminiecki L."/>
            <person name="Iacono M."/>
            <person name="Ikeo K."/>
            <person name="Iwama A."/>
            <person name="Ishikawa T."/>
            <person name="Jakt M."/>
            <person name="Kanapin A."/>
            <person name="Katoh M."/>
            <person name="Kawasawa Y."/>
            <person name="Kelso J."/>
            <person name="Kitamura H."/>
            <person name="Kitano H."/>
            <person name="Kollias G."/>
            <person name="Krishnan S.P."/>
            <person name="Kruger A."/>
            <person name="Kummerfeld S.K."/>
            <person name="Kurochkin I.V."/>
            <person name="Lareau L.F."/>
            <person name="Lazarevic D."/>
            <person name="Lipovich L."/>
            <person name="Liu J."/>
            <person name="Liuni S."/>
            <person name="McWilliam S."/>
            <person name="Madan Babu M."/>
            <person name="Madera M."/>
            <person name="Marchionni L."/>
            <person name="Matsuda H."/>
            <person name="Matsuzawa S."/>
            <person name="Miki H."/>
            <person name="Mignone F."/>
            <person name="Miyake S."/>
            <person name="Morris K."/>
            <person name="Mottagui-Tabar S."/>
            <person name="Mulder N."/>
            <person name="Nakano N."/>
            <person name="Nakauchi H."/>
            <person name="Ng P."/>
            <person name="Nilsson R."/>
            <person name="Nishiguchi S."/>
            <person name="Nishikawa S."/>
            <person name="Nori F."/>
            <person name="Ohara O."/>
            <person name="Okazaki Y."/>
            <person name="Orlando V."/>
            <person name="Pang K.C."/>
            <person name="Pavan W.J."/>
            <person name="Pavesi G."/>
            <person name="Pesole G."/>
            <person name="Petrovsky N."/>
            <person name="Piazza S."/>
            <person name="Reed J."/>
            <person name="Reid J.F."/>
            <person name="Ring B.Z."/>
            <person name="Ringwald M."/>
            <person name="Rost B."/>
            <person name="Ruan Y."/>
            <person name="Salzberg S.L."/>
            <person name="Sandelin A."/>
            <person name="Schneider C."/>
            <person name="Schoenbach C."/>
            <person name="Sekiguchi K."/>
            <person name="Semple C.A."/>
            <person name="Seno S."/>
            <person name="Sessa L."/>
            <person name="Sheng Y."/>
            <person name="Shibata Y."/>
            <person name="Shimada H."/>
            <person name="Shimada K."/>
            <person name="Silva D."/>
            <person name="Sinclair B."/>
            <person name="Sperling S."/>
            <person name="Stupka E."/>
            <person name="Sugiura K."/>
            <person name="Sultana R."/>
            <person name="Takenaka Y."/>
            <person name="Taki K."/>
            <person name="Tammoja K."/>
            <person name="Tan S.L."/>
            <person name="Tang S."/>
            <person name="Taylor M.S."/>
            <person name="Tegner J."/>
            <person name="Teichmann S.A."/>
            <person name="Ueda H.R."/>
            <person name="van Nimwegen E."/>
            <person name="Verardo R."/>
            <person name="Wei C.L."/>
            <person name="Yagi K."/>
            <person name="Yamanishi H."/>
            <person name="Zabarovsky E."/>
            <person name="Zhu S."/>
            <person name="Zimmer A."/>
            <person name="Hide W."/>
            <person name="Bult C."/>
            <person name="Grimmond S.M."/>
            <person name="Teasdale R.D."/>
            <person name="Liu E.T."/>
            <person name="Brusic V."/>
            <person name="Quackenbush J."/>
            <person name="Wahlestedt C."/>
            <person name="Mattick J.S."/>
            <person name="Hume D.A."/>
            <person name="Kai C."/>
            <person name="Sasaki D."/>
            <person name="Tomaru Y."/>
            <person name="Fukuda S."/>
            <person name="Kanamori-Katayama M."/>
            <person name="Suzuki M."/>
            <person name="Aoki J."/>
            <person name="Arakawa T."/>
            <person name="Iida J."/>
            <person name="Imamura K."/>
            <person name="Itoh M."/>
            <person name="Kato T."/>
            <person name="Kawaji H."/>
            <person name="Kawagashira N."/>
            <person name="Kawashima T."/>
            <person name="Kojima M."/>
            <person name="Kondo S."/>
            <person name="Konno H."/>
            <person name="Nakano K."/>
            <person name="Ninomiya N."/>
            <person name="Nishio T."/>
            <person name="Okada M."/>
            <person name="Plessy C."/>
            <person name="Shibata K."/>
            <person name="Shiraki T."/>
            <person name="Suzuki S."/>
            <person name="Tagami M."/>
            <person name="Waki K."/>
            <person name="Watahiki A."/>
            <person name="Okamura-Oho Y."/>
            <person name="Suzuki H."/>
            <person name="Kawai J."/>
            <person name="Hayashizaki Y."/>
        </authorList>
    </citation>
    <scope>NUCLEOTIDE SEQUENCE [LARGE SCALE MRNA] (ISOFORMS 3 AND 4)</scope>
    <source>
        <strain>C57BL/6J</strain>
        <tissue>Corpora quadrigemina</tissue>
        <tissue>Hypothalamus</tissue>
        <tissue>Testis</tissue>
    </source>
</reference>
<reference key="3">
    <citation type="journal article" date="2004" name="Genome Res.">
        <title>The status, quality, and expansion of the NIH full-length cDNA project: the Mammalian Gene Collection (MGC).</title>
        <authorList>
            <consortium name="The MGC Project Team"/>
        </authorList>
    </citation>
    <scope>NUCLEOTIDE SEQUENCE [LARGE SCALE MRNA] (ISOFORM 2)</scope>
    <source>
        <strain>CD-1</strain>
        <tissue>Neural stem cell</tissue>
    </source>
</reference>
<reference key="4">
    <citation type="journal article" date="2000" name="Eur. J. Biochem.">
        <title>Growth factor-induced promoter activation of murine phospholipase C delta4 gene.</title>
        <authorList>
            <person name="Fukami K."/>
            <person name="Takenaka K."/>
            <person name="Nagano K."/>
            <person name="Takenawa T."/>
        </authorList>
    </citation>
    <scope>INDUCTION</scope>
</reference>
<reference key="5">
    <citation type="journal article" date="2001" name="Science">
        <title>Requirement of phospholipase Cdelta4 for the zona pellucida-induced acrosome reaction.</title>
        <authorList>
            <person name="Fukami K."/>
            <person name="Nakao K."/>
            <person name="Inoue T."/>
            <person name="Kataoka Y."/>
            <person name="Kurokawa M."/>
            <person name="Fissore R.A."/>
            <person name="Nakamura K."/>
            <person name="Katsuki M."/>
            <person name="Mikoshiba K."/>
            <person name="Yoshida N."/>
            <person name="Takenawa T."/>
        </authorList>
    </citation>
    <scope>FUNCTION</scope>
    <scope>DISRUPTION PHENOTYPE</scope>
</reference>
<reference key="6">
    <citation type="journal article" date="2003" name="J. Cell Biol.">
        <title>Phospholipase Cdelta4 is required for Ca2+ mobilization essential for acrosome reaction in sperm.</title>
        <authorList>
            <person name="Fukami K."/>
            <person name="Yoshida M."/>
            <person name="Inoue T."/>
            <person name="Kurokawa M."/>
            <person name="Fissore R.A."/>
            <person name="Yoshida N."/>
            <person name="Mikoshiba K."/>
            <person name="Takenawa T."/>
        </authorList>
    </citation>
    <scope>FUNCTION</scope>
</reference>
<reference key="7">
    <citation type="journal article" date="2005" name="J. Biochem.">
        <title>Phospholipase Cdelta4 associates with glutamate receptor interacting protein 1 in testis.</title>
        <authorList>
            <person name="Irino Y."/>
            <person name="Ichinohe M."/>
            <person name="Nakamura Y."/>
            <person name="Nakahara M."/>
            <person name="Fukami K."/>
        </authorList>
    </citation>
    <scope>INTERACTION WITH GRIP1</scope>
</reference>
<reference key="8">
    <citation type="journal article" date="2006" name="J. Biochem.">
        <title>Disruption of phospholipase Cdelta4 gene modulates the liver regeneration in cooperation with nuclear protein kinase C.</title>
        <authorList>
            <person name="Akutagawa A."/>
            <person name="Fukami K."/>
            <person name="Banno Y."/>
            <person name="Takenawa T."/>
            <person name="Kannagi R."/>
            <person name="Yokoyama Y."/>
            <person name="Oda K."/>
            <person name="Nagino M."/>
            <person name="Nimura Y."/>
            <person name="Yoshida S."/>
            <person name="Tamiya-Koizumi K."/>
        </authorList>
    </citation>
    <scope>FUNCTION</scope>
</reference>
<organism>
    <name type="scientific">Mus musculus</name>
    <name type="common">Mouse</name>
    <dbReference type="NCBI Taxonomy" id="10090"/>
    <lineage>
        <taxon>Eukaryota</taxon>
        <taxon>Metazoa</taxon>
        <taxon>Chordata</taxon>
        <taxon>Craniata</taxon>
        <taxon>Vertebrata</taxon>
        <taxon>Euteleostomi</taxon>
        <taxon>Mammalia</taxon>
        <taxon>Eutheria</taxon>
        <taxon>Euarchontoglires</taxon>
        <taxon>Glires</taxon>
        <taxon>Rodentia</taxon>
        <taxon>Myomorpha</taxon>
        <taxon>Muroidea</taxon>
        <taxon>Muridae</taxon>
        <taxon>Murinae</taxon>
        <taxon>Mus</taxon>
        <taxon>Mus</taxon>
    </lineage>
</organism>